<name>GPMI_FRATF</name>
<gene>
    <name evidence="1" type="primary">gpmI</name>
    <name type="ordered locus">FTA_1575</name>
</gene>
<feature type="chain" id="PRO_1000063969" description="2,3-bisphosphoglycerate-independent phosphoglycerate mutase">
    <location>
        <begin position="1"/>
        <end position="512"/>
    </location>
</feature>
<feature type="active site" description="Phosphoserine intermediate" evidence="1">
    <location>
        <position position="61"/>
    </location>
</feature>
<feature type="binding site" evidence="1">
    <location>
        <position position="11"/>
    </location>
    <ligand>
        <name>Mn(2+)</name>
        <dbReference type="ChEBI" id="CHEBI:29035"/>
        <label>2</label>
    </ligand>
</feature>
<feature type="binding site" evidence="1">
    <location>
        <position position="61"/>
    </location>
    <ligand>
        <name>Mn(2+)</name>
        <dbReference type="ChEBI" id="CHEBI:29035"/>
        <label>2</label>
    </ligand>
</feature>
<feature type="binding site" evidence="1">
    <location>
        <position position="122"/>
    </location>
    <ligand>
        <name>substrate</name>
    </ligand>
</feature>
<feature type="binding site" evidence="1">
    <location>
        <begin position="152"/>
        <end position="153"/>
    </location>
    <ligand>
        <name>substrate</name>
    </ligand>
</feature>
<feature type="binding site" evidence="1">
    <location>
        <position position="184"/>
    </location>
    <ligand>
        <name>substrate</name>
    </ligand>
</feature>
<feature type="binding site" evidence="1">
    <location>
        <position position="190"/>
    </location>
    <ligand>
        <name>substrate</name>
    </ligand>
</feature>
<feature type="binding site" evidence="1">
    <location>
        <begin position="259"/>
        <end position="262"/>
    </location>
    <ligand>
        <name>substrate</name>
    </ligand>
</feature>
<feature type="binding site" evidence="1">
    <location>
        <position position="332"/>
    </location>
    <ligand>
        <name>substrate</name>
    </ligand>
</feature>
<feature type="binding site" evidence="1">
    <location>
        <position position="399"/>
    </location>
    <ligand>
        <name>Mn(2+)</name>
        <dbReference type="ChEBI" id="CHEBI:29035"/>
        <label>1</label>
    </ligand>
</feature>
<feature type="binding site" evidence="1">
    <location>
        <position position="403"/>
    </location>
    <ligand>
        <name>Mn(2+)</name>
        <dbReference type="ChEBI" id="CHEBI:29035"/>
        <label>1</label>
    </ligand>
</feature>
<feature type="binding site" evidence="1">
    <location>
        <position position="440"/>
    </location>
    <ligand>
        <name>Mn(2+)</name>
        <dbReference type="ChEBI" id="CHEBI:29035"/>
        <label>2</label>
    </ligand>
</feature>
<feature type="binding site" evidence="1">
    <location>
        <position position="441"/>
    </location>
    <ligand>
        <name>Mn(2+)</name>
        <dbReference type="ChEBI" id="CHEBI:29035"/>
        <label>2</label>
    </ligand>
</feature>
<feature type="binding site" evidence="1">
    <location>
        <position position="459"/>
    </location>
    <ligand>
        <name>Mn(2+)</name>
        <dbReference type="ChEBI" id="CHEBI:29035"/>
        <label>1</label>
    </ligand>
</feature>
<protein>
    <recommendedName>
        <fullName evidence="1">2,3-bisphosphoglycerate-independent phosphoglycerate mutase</fullName>
        <shortName evidence="1">BPG-independent PGAM</shortName>
        <shortName evidence="1">Phosphoglyceromutase</shortName>
        <shortName evidence="1">iPGM</shortName>
        <ecNumber evidence="1">5.4.2.12</ecNumber>
    </recommendedName>
</protein>
<comment type="function">
    <text evidence="1">Catalyzes the interconversion of 2-phosphoglycerate and 3-phosphoglycerate.</text>
</comment>
<comment type="catalytic activity">
    <reaction evidence="1">
        <text>(2R)-2-phosphoglycerate = (2R)-3-phosphoglycerate</text>
        <dbReference type="Rhea" id="RHEA:15901"/>
        <dbReference type="ChEBI" id="CHEBI:58272"/>
        <dbReference type="ChEBI" id="CHEBI:58289"/>
        <dbReference type="EC" id="5.4.2.12"/>
    </reaction>
</comment>
<comment type="cofactor">
    <cofactor evidence="1">
        <name>Mn(2+)</name>
        <dbReference type="ChEBI" id="CHEBI:29035"/>
    </cofactor>
    <text evidence="1">Binds 2 manganese ions per subunit.</text>
</comment>
<comment type="pathway">
    <text evidence="1">Carbohydrate degradation; glycolysis; pyruvate from D-glyceraldehyde 3-phosphate: step 3/5.</text>
</comment>
<comment type="subunit">
    <text evidence="1">Monomer.</text>
</comment>
<comment type="similarity">
    <text evidence="1">Belongs to the BPG-independent phosphoglycerate mutase family.</text>
</comment>
<comment type="sequence caution" evidence="2">
    <conflict type="erroneous initiation">
        <sequence resource="EMBL-CDS" id="ABU62050"/>
    </conflict>
    <text>Extended N-terminus.</text>
</comment>
<dbReference type="EC" id="5.4.2.12" evidence="1"/>
<dbReference type="EMBL" id="CP000803">
    <property type="protein sequence ID" value="ABU62050.2"/>
    <property type="status" value="ALT_INIT"/>
    <property type="molecule type" value="Genomic_DNA"/>
</dbReference>
<dbReference type="RefSeq" id="WP_003019368.1">
    <property type="nucleotide sequence ID" value="NC_009749.1"/>
</dbReference>
<dbReference type="SMR" id="A7NDJ7"/>
<dbReference type="KEGG" id="fta:FTA_1575"/>
<dbReference type="HOGENOM" id="CLU_026099_2_0_6"/>
<dbReference type="UniPathway" id="UPA00109">
    <property type="reaction ID" value="UER00186"/>
</dbReference>
<dbReference type="GO" id="GO:0005829">
    <property type="term" value="C:cytosol"/>
    <property type="evidence" value="ECO:0007669"/>
    <property type="project" value="TreeGrafter"/>
</dbReference>
<dbReference type="GO" id="GO:0030145">
    <property type="term" value="F:manganese ion binding"/>
    <property type="evidence" value="ECO:0007669"/>
    <property type="project" value="UniProtKB-UniRule"/>
</dbReference>
<dbReference type="GO" id="GO:0004619">
    <property type="term" value="F:phosphoglycerate mutase activity"/>
    <property type="evidence" value="ECO:0007669"/>
    <property type="project" value="UniProtKB-EC"/>
</dbReference>
<dbReference type="GO" id="GO:0006007">
    <property type="term" value="P:glucose catabolic process"/>
    <property type="evidence" value="ECO:0007669"/>
    <property type="project" value="InterPro"/>
</dbReference>
<dbReference type="GO" id="GO:0006096">
    <property type="term" value="P:glycolytic process"/>
    <property type="evidence" value="ECO:0007669"/>
    <property type="project" value="UniProtKB-UniRule"/>
</dbReference>
<dbReference type="CDD" id="cd16010">
    <property type="entry name" value="iPGM"/>
    <property type="match status" value="1"/>
</dbReference>
<dbReference type="FunFam" id="3.40.1450.10:FF:000001">
    <property type="entry name" value="2,3-bisphosphoglycerate-independent phosphoglycerate mutase"/>
    <property type="match status" value="1"/>
</dbReference>
<dbReference type="FunFam" id="3.40.720.10:FF:000001">
    <property type="entry name" value="2,3-bisphosphoglycerate-independent phosphoglycerate mutase"/>
    <property type="match status" value="1"/>
</dbReference>
<dbReference type="Gene3D" id="3.40.720.10">
    <property type="entry name" value="Alkaline Phosphatase, subunit A"/>
    <property type="match status" value="1"/>
</dbReference>
<dbReference type="Gene3D" id="3.40.1450.10">
    <property type="entry name" value="BPG-independent phosphoglycerate mutase, domain B"/>
    <property type="match status" value="1"/>
</dbReference>
<dbReference type="HAMAP" id="MF_01038">
    <property type="entry name" value="GpmI"/>
    <property type="match status" value="1"/>
</dbReference>
<dbReference type="InterPro" id="IPR017850">
    <property type="entry name" value="Alkaline_phosphatase_core_sf"/>
</dbReference>
<dbReference type="InterPro" id="IPR011258">
    <property type="entry name" value="BPG-indep_PGM_N"/>
</dbReference>
<dbReference type="InterPro" id="IPR006124">
    <property type="entry name" value="Metalloenzyme"/>
</dbReference>
<dbReference type="InterPro" id="IPR036646">
    <property type="entry name" value="PGAM_B_sf"/>
</dbReference>
<dbReference type="InterPro" id="IPR005995">
    <property type="entry name" value="Pgm_bpd_ind"/>
</dbReference>
<dbReference type="NCBIfam" id="TIGR01307">
    <property type="entry name" value="pgm_bpd_ind"/>
    <property type="match status" value="1"/>
</dbReference>
<dbReference type="PANTHER" id="PTHR31637">
    <property type="entry name" value="2,3-BISPHOSPHOGLYCERATE-INDEPENDENT PHOSPHOGLYCERATE MUTASE"/>
    <property type="match status" value="1"/>
</dbReference>
<dbReference type="PANTHER" id="PTHR31637:SF0">
    <property type="entry name" value="2,3-BISPHOSPHOGLYCERATE-INDEPENDENT PHOSPHOGLYCERATE MUTASE"/>
    <property type="match status" value="1"/>
</dbReference>
<dbReference type="Pfam" id="PF06415">
    <property type="entry name" value="iPGM_N"/>
    <property type="match status" value="1"/>
</dbReference>
<dbReference type="Pfam" id="PF01676">
    <property type="entry name" value="Metalloenzyme"/>
    <property type="match status" value="1"/>
</dbReference>
<dbReference type="PIRSF" id="PIRSF001492">
    <property type="entry name" value="IPGAM"/>
    <property type="match status" value="1"/>
</dbReference>
<dbReference type="SUPFAM" id="SSF64158">
    <property type="entry name" value="2,3-Bisphosphoglycerate-independent phosphoglycerate mutase, substrate-binding domain"/>
    <property type="match status" value="1"/>
</dbReference>
<dbReference type="SUPFAM" id="SSF53649">
    <property type="entry name" value="Alkaline phosphatase-like"/>
    <property type="match status" value="1"/>
</dbReference>
<reference key="1">
    <citation type="journal article" date="2009" name="PLoS ONE">
        <title>Complete genome sequence of Francisella tularensis subspecies holarctica FTNF002-00.</title>
        <authorList>
            <person name="Barabote R.D."/>
            <person name="Xie G."/>
            <person name="Brettin T.S."/>
            <person name="Hinrichs S.H."/>
            <person name="Fey P.D."/>
            <person name="Jay J.J."/>
            <person name="Engle J.L."/>
            <person name="Godbole S.D."/>
            <person name="Noronha J.M."/>
            <person name="Scheuermann R.H."/>
            <person name="Zhou L.W."/>
            <person name="Lion C."/>
            <person name="Dempsey M.P."/>
        </authorList>
    </citation>
    <scope>NUCLEOTIDE SEQUENCE [LARGE SCALE GENOMIC DNA]</scope>
    <source>
        <strain>FTNF002-00 / FTA</strain>
    </source>
</reference>
<organism>
    <name type="scientific">Francisella tularensis subsp. holarctica (strain FTNF002-00 / FTA)</name>
    <dbReference type="NCBI Taxonomy" id="458234"/>
    <lineage>
        <taxon>Bacteria</taxon>
        <taxon>Pseudomonadati</taxon>
        <taxon>Pseudomonadota</taxon>
        <taxon>Gammaproteobacteria</taxon>
        <taxon>Thiotrichales</taxon>
        <taxon>Francisellaceae</taxon>
        <taxon>Francisella</taxon>
    </lineage>
</organism>
<sequence>MKKTTLLVILDGWGYSDSDYFNAIKNANTPTWDSIWQEFPKTLINASSLEVGLPRSQMGNSEVGHVNIGCGRVVYQELTKIDKAIEEKTFGDNKAICAAIDNVIKNDSNLHLIGLLSPGGVHSHEEHIFEMIKIAKQKGIKRLYLHAFLDGRDTPPRSAEKSIKKADKLLQDLNLGYIASVCGRYYAMDRDNRWDRVEKAYNAIVNANADFIYDSALEALEQSYARDQSDEFVIPTCIKKDGHLVKVQDNDSVIFMNFRADRAREISHAFTDESFDHFPRKKHLNINFTTLTEYDSKLKCAVAFPPEQPINTLGEVLMKNHKTQLRIAETEKYPHVTFFFNGGREEQFEGEDRILIPSPKVATYDLQPEMSAPEVTDKLVAAINSGKYDCIVCNYANSDMVGHTGNYEAAMQAIEYLDKCIARLKDAILEHDGNMFITADHGNADMMVNPETQKPHTAHTTNLVPFIYVGHKKAQVALEHGKLSDIAPTLLNVMGIAQPKEMTGKTIFNFEK</sequence>
<proteinExistence type="inferred from homology"/>
<keyword id="KW-0324">Glycolysis</keyword>
<keyword id="KW-0413">Isomerase</keyword>
<keyword id="KW-0464">Manganese</keyword>
<keyword id="KW-0479">Metal-binding</keyword>
<evidence type="ECO:0000255" key="1">
    <source>
        <dbReference type="HAMAP-Rule" id="MF_01038"/>
    </source>
</evidence>
<evidence type="ECO:0000305" key="2"/>
<accession>A7NDJ7</accession>